<comment type="function">
    <molecule>Transforming growth factor beta-2 proprotein</molecule>
    <text evidence="1 2">Precursor of the Latency-associated peptide (LAP) and Transforming growth factor beta-2 (TGF-beta-2) chains, which constitute the regulatory and active subunit of TGF-beta-2, respectively.</text>
</comment>
<comment type="function">
    <molecule>Latency-associated peptide</molecule>
    <text evidence="1 2">Required to maintain the Transforming growth factor beta-2 (TGF-beta-2) chain in a latent state during storage in extracellular matrix. Associates non-covalently with TGF-beta-2 and regulates its activation via interaction with 'milieu molecules', such as LTBP1 and LRRC32/GARP, that control activation of TGF-beta-2.</text>
</comment>
<comment type="function">
    <molecule>Transforming growth factor beta-2</molecule>
    <text evidence="1 2 4">Multifunctional protein that regulates various processes such as angiogenesis and heart development (By similarity). Activation into mature form follows different steps: following cleavage of the proprotein in the Golgi apparatus, Latency-associated peptide (LAP) and Transforming growth factor beta-2 (TGF-beta-2) chains remain non-covalently linked rendering TGF-beta-2 inactive during storage in extracellular matrix (By similarity). At the same time, LAP chain interacts with 'milieu molecules', such as LTBP1 and LRRC32/GARP, that control activation of TGF-beta-2 and maintain it in a latent state during storage in extracellular milieus (By similarity). Once activated following release of LAP, TGF-beta-2 acts by binding to TGF-beta receptors (TGFBR1 and TGFBR2), which transduce signal (By similarity).</text>
</comment>
<comment type="subunit">
    <text evidence="1 3 4">Interacts with the serine proteases, HTRA1 and HTRA3 (By similarity). Interacts with ASPN (By similarity). Interacts with MFAP5 (By similarity).</text>
</comment>
<comment type="subunit">
    <molecule>Latency-associated peptide</molecule>
    <text evidence="1 3 4">Interacts with Transforming growth factor beta-2 (TGF-beta-2) chain; interaction is non-covalent and maintains (TGF-beta-2) in a latent state (By similarity). Interacts with LRRC32/GARP; leading to regulate activation of TGF-beta-2 (By similarity). Interacts with NREP; the interaction results in a decrease in TGFB2 autoinduction (By similarity).</text>
</comment>
<comment type="subunit">
    <molecule>Transforming growth factor beta-2</molecule>
    <text evidence="1 3 4">Transforming growth factor beta-2: Homodimer; disulfide-linked (By similarity). Transforming growth factor beta-2: Interacts with TGF-beta receptors (TGFBR1 and TGFBR2), leading to signal transduction (By similarity).</text>
</comment>
<comment type="subcellular location">
    <molecule>Latency-associated peptide</molecule>
    <subcellularLocation>
        <location evidence="1">Secreted</location>
        <location evidence="1">Extracellular space</location>
        <location evidence="1">Extracellular matrix</location>
    </subcellularLocation>
</comment>
<comment type="subcellular location">
    <molecule>Transforming growth factor beta-2</molecule>
    <subcellularLocation>
        <location evidence="1">Secreted</location>
    </subcellularLocation>
</comment>
<comment type="PTM">
    <molecule>Transforming growth factor beta-2</molecule>
    <text evidence="1">The precursor proprotein is cleaved in the Golgi apparatus to form Transforming growth factor beta-2 (TGF-beta-2) and Latency-associated peptide (LAP) chains, which remain non-covalently linked, rendering TGF-beta-2 inactive.</text>
</comment>
<comment type="similarity">
    <text evidence="6">Belongs to the TGF-beta family.</text>
</comment>
<sequence>MHYCVLSAFLLLHLVTAALSLSTCSTLDMDQFMRKRIEAIRGQILSKLKLTSPPEDYPEPEEVPPEVISIYNSTRDLLQEKASRRAAACERERSDEEYYAKEVYKIDMPPFFPSENAIPPTFYRPYFRIVRFDVSAMEKNASNLVKAEFRVFRLQNPKARVPEQRIELYQILKSKDLTSPTQRYIDSKVVKTRAEGEWLSFDVTDAVHEWLHHKDRNLGFKISLHCPCCTFVPSNNYIIPNKSEELEARFAGIDGTSTYTSGDQKTIKSTRKKNSGKTPHLLLMLLPSYRLESQQSNRRKKRALDAAYCFRNVQDNCCLRPLYIDFKRDLGWKWIHEPKGYNANFCAGACPYLWSSDTQHSRVLSLYNTINPEASASPCCVSQDLEPLTILYYIGKTPKIEQLSNMIVKSCKCS</sequence>
<reference key="1">
    <citation type="submission" date="2005-09" db="EMBL/GenBank/DDBJ databases">
        <title>Mustela putorious furo transforming growth factor beta-2 cDNA.</title>
        <authorList>
            <person name="Senchak A.J."/>
            <person name="Sato A."/>
            <person name="Vazquez R."/>
            <person name="Cable B.B."/>
        </authorList>
    </citation>
    <scope>NUCLEOTIDE SEQUENCE [MRNA]</scope>
</reference>
<protein>
    <recommendedName>
        <fullName>Transforming growth factor beta-2 proprotein</fullName>
    </recommendedName>
    <component>
        <recommendedName>
            <fullName>Latency-associated peptide</fullName>
            <shortName>LAP</shortName>
        </recommendedName>
    </component>
    <component>
        <recommendedName>
            <fullName>Transforming growth factor beta-2</fullName>
            <shortName>TGF-beta-2</shortName>
        </recommendedName>
    </component>
</protein>
<proteinExistence type="evidence at transcript level"/>
<accession>Q38L25</accession>
<evidence type="ECO:0000250" key="1">
    <source>
        <dbReference type="UniProtKB" id="P01137"/>
    </source>
</evidence>
<evidence type="ECO:0000250" key="2">
    <source>
        <dbReference type="UniProtKB" id="P04202"/>
    </source>
</evidence>
<evidence type="ECO:0000250" key="3">
    <source>
        <dbReference type="UniProtKB" id="P27090"/>
    </source>
</evidence>
<evidence type="ECO:0000250" key="4">
    <source>
        <dbReference type="UniProtKB" id="P61812"/>
    </source>
</evidence>
<evidence type="ECO:0000255" key="5"/>
<evidence type="ECO:0000305" key="6"/>
<gene>
    <name type="primary">TGFB2</name>
</gene>
<keyword id="KW-0165">Cleavage on pair of basic residues</keyword>
<keyword id="KW-1015">Disulfide bond</keyword>
<keyword id="KW-0272">Extracellular matrix</keyword>
<keyword id="KW-0325">Glycoprotein</keyword>
<keyword id="KW-0339">Growth factor</keyword>
<keyword id="KW-0497">Mitogen</keyword>
<keyword id="KW-1185">Reference proteome</keyword>
<keyword id="KW-0964">Secreted</keyword>
<keyword id="KW-0732">Signal</keyword>
<feature type="signal peptide" evidence="5">
    <location>
        <begin position="1"/>
        <end position="20"/>
    </location>
</feature>
<feature type="chain" id="PRO_0000456182" description="Transforming growth factor beta-2 proprotein">
    <location>
        <begin position="21"/>
        <end position="414"/>
    </location>
</feature>
<feature type="chain" id="PRO_0000232492" description="Latency-associated peptide" evidence="4">
    <location>
        <begin position="21"/>
        <end position="302"/>
    </location>
</feature>
<feature type="chain" id="PRO_0000232493" description="Transforming growth factor beta-2" evidence="4">
    <location>
        <begin position="303"/>
        <end position="414"/>
    </location>
</feature>
<feature type="glycosylation site" description="N-linked (GlcNAc...) asparagine" evidence="5">
    <location>
        <position position="72"/>
    </location>
</feature>
<feature type="glycosylation site" description="N-linked (GlcNAc...) asparagine" evidence="5">
    <location>
        <position position="140"/>
    </location>
</feature>
<feature type="glycosylation site" description="N-linked (GlcNAc...) asparagine" evidence="5">
    <location>
        <position position="241"/>
    </location>
</feature>
<feature type="disulfide bond" evidence="4">
    <location>
        <begin position="309"/>
        <end position="318"/>
    </location>
</feature>
<feature type="disulfide bond" evidence="4">
    <location>
        <begin position="317"/>
        <end position="380"/>
    </location>
</feature>
<feature type="disulfide bond" evidence="4">
    <location>
        <begin position="346"/>
        <end position="411"/>
    </location>
</feature>
<feature type="disulfide bond" evidence="4">
    <location>
        <begin position="350"/>
        <end position="413"/>
    </location>
</feature>
<feature type="disulfide bond" description="Interchain" evidence="4">
    <location>
        <position position="379"/>
    </location>
</feature>
<dbReference type="EMBL" id="DQ217927">
    <property type="protein sequence ID" value="ABA86560.1"/>
    <property type="molecule type" value="mRNA"/>
</dbReference>
<dbReference type="RefSeq" id="NP_001297116.1">
    <property type="nucleotide sequence ID" value="NM_001310187.1"/>
</dbReference>
<dbReference type="SMR" id="Q38L25"/>
<dbReference type="STRING" id="9669.ENSMPUP00000004208"/>
<dbReference type="GlyCosmos" id="Q38L25">
    <property type="glycosylation" value="3 sites, No reported glycans"/>
</dbReference>
<dbReference type="GeneID" id="101677182"/>
<dbReference type="CTD" id="7042"/>
<dbReference type="eggNOG" id="KOG3900">
    <property type="taxonomic scope" value="Eukaryota"/>
</dbReference>
<dbReference type="InParanoid" id="Q38L25"/>
<dbReference type="OrthoDB" id="6092228at2759"/>
<dbReference type="Proteomes" id="UP000000715">
    <property type="component" value="Unplaced"/>
</dbReference>
<dbReference type="GO" id="GO:0031012">
    <property type="term" value="C:extracellular matrix"/>
    <property type="evidence" value="ECO:0000250"/>
    <property type="project" value="AgBase"/>
</dbReference>
<dbReference type="GO" id="GO:0005576">
    <property type="term" value="C:extracellular region"/>
    <property type="evidence" value="ECO:0000250"/>
    <property type="project" value="AgBase"/>
</dbReference>
<dbReference type="GO" id="GO:0005615">
    <property type="term" value="C:extracellular space"/>
    <property type="evidence" value="ECO:0000250"/>
    <property type="project" value="AgBase"/>
</dbReference>
<dbReference type="GO" id="GO:0001540">
    <property type="term" value="F:amyloid-beta binding"/>
    <property type="evidence" value="ECO:0000250"/>
    <property type="project" value="AgBase"/>
</dbReference>
<dbReference type="GO" id="GO:0005125">
    <property type="term" value="F:cytokine activity"/>
    <property type="evidence" value="ECO:0007669"/>
    <property type="project" value="TreeGrafter"/>
</dbReference>
<dbReference type="GO" id="GO:0008083">
    <property type="term" value="F:growth factor activity"/>
    <property type="evidence" value="ECO:0007669"/>
    <property type="project" value="UniProtKB-KW"/>
</dbReference>
<dbReference type="GO" id="GO:0042803">
    <property type="term" value="F:protein homodimerization activity"/>
    <property type="evidence" value="ECO:0000250"/>
    <property type="project" value="AgBase"/>
</dbReference>
<dbReference type="GO" id="GO:0005102">
    <property type="term" value="F:signaling receptor binding"/>
    <property type="evidence" value="ECO:0000250"/>
    <property type="project" value="AgBase"/>
</dbReference>
<dbReference type="GO" id="GO:0005160">
    <property type="term" value="F:transforming growth factor beta receptor binding"/>
    <property type="evidence" value="ECO:0000250"/>
    <property type="project" value="AgBase"/>
</dbReference>
<dbReference type="GO" id="GO:0005114">
    <property type="term" value="F:type II transforming growth factor beta receptor binding"/>
    <property type="evidence" value="ECO:0000250"/>
    <property type="project" value="AgBase"/>
</dbReference>
<dbReference type="GO" id="GO:0034714">
    <property type="term" value="F:type III transforming growth factor beta receptor binding"/>
    <property type="evidence" value="ECO:0000250"/>
    <property type="project" value="AgBase"/>
</dbReference>
<dbReference type="GO" id="GO:0060317">
    <property type="term" value="P:cardiac epithelial to mesenchymal transition"/>
    <property type="evidence" value="ECO:0000250"/>
    <property type="project" value="AgBase"/>
</dbReference>
<dbReference type="GO" id="GO:0060038">
    <property type="term" value="P:cardiac muscle cell proliferation"/>
    <property type="evidence" value="ECO:0000250"/>
    <property type="project" value="AgBase"/>
</dbReference>
<dbReference type="GO" id="GO:0010002">
    <property type="term" value="P:cardioblast differentiation"/>
    <property type="evidence" value="ECO:0000250"/>
    <property type="project" value="AgBase"/>
</dbReference>
<dbReference type="GO" id="GO:0016477">
    <property type="term" value="P:cell migration"/>
    <property type="evidence" value="ECO:0000250"/>
    <property type="project" value="AgBase"/>
</dbReference>
<dbReference type="GO" id="GO:0000902">
    <property type="term" value="P:cell morphogenesis"/>
    <property type="evidence" value="ECO:0000250"/>
    <property type="project" value="AgBase"/>
</dbReference>
<dbReference type="GO" id="GO:0045216">
    <property type="term" value="P:cell-cell junction organization"/>
    <property type="evidence" value="ECO:0000250"/>
    <property type="project" value="AgBase"/>
</dbReference>
<dbReference type="GO" id="GO:0030199">
    <property type="term" value="P:collagen fibril organization"/>
    <property type="evidence" value="ECO:0000250"/>
    <property type="project" value="AgBase"/>
</dbReference>
<dbReference type="GO" id="GO:0048566">
    <property type="term" value="P:embryonic digestive tract development"/>
    <property type="evidence" value="ECO:0000250"/>
    <property type="project" value="AgBase"/>
</dbReference>
<dbReference type="GO" id="GO:0030855">
    <property type="term" value="P:epithelial cell differentiation"/>
    <property type="evidence" value="ECO:0000250"/>
    <property type="project" value="AgBase"/>
</dbReference>
<dbReference type="GO" id="GO:0001837">
    <property type="term" value="P:epithelial to mesenchymal transition"/>
    <property type="evidence" value="ECO:0000250"/>
    <property type="project" value="AgBase"/>
</dbReference>
<dbReference type="GO" id="GO:0097191">
    <property type="term" value="P:extrinsic apoptotic signaling pathway"/>
    <property type="evidence" value="ECO:0000250"/>
    <property type="project" value="AgBase"/>
</dbReference>
<dbReference type="GO" id="GO:0001654">
    <property type="term" value="P:eye development"/>
    <property type="evidence" value="ECO:0000250"/>
    <property type="project" value="AgBase"/>
</dbReference>
<dbReference type="GO" id="GO:0008347">
    <property type="term" value="P:glial cell migration"/>
    <property type="evidence" value="ECO:0000250"/>
    <property type="project" value="AgBase"/>
</dbReference>
<dbReference type="GO" id="GO:0001942">
    <property type="term" value="P:hair follicle development"/>
    <property type="evidence" value="ECO:0000250"/>
    <property type="project" value="AgBase"/>
</dbReference>
<dbReference type="GO" id="GO:0007507">
    <property type="term" value="P:heart development"/>
    <property type="evidence" value="ECO:0000250"/>
    <property type="project" value="AgBase"/>
</dbReference>
<dbReference type="GO" id="GO:0003007">
    <property type="term" value="P:heart morphogenesis"/>
    <property type="evidence" value="ECO:0000250"/>
    <property type="project" value="AgBase"/>
</dbReference>
<dbReference type="GO" id="GO:0030308">
    <property type="term" value="P:negative regulation of cell growth"/>
    <property type="evidence" value="ECO:0000250"/>
    <property type="project" value="AgBase"/>
</dbReference>
<dbReference type="GO" id="GO:0008285">
    <property type="term" value="P:negative regulation of cell population proliferation"/>
    <property type="evidence" value="ECO:0000250"/>
    <property type="project" value="AgBase"/>
</dbReference>
<dbReference type="GO" id="GO:0050680">
    <property type="term" value="P:negative regulation of epithelial cell proliferation"/>
    <property type="evidence" value="ECO:0000250"/>
    <property type="project" value="AgBase"/>
</dbReference>
<dbReference type="GO" id="GO:0010936">
    <property type="term" value="P:negative regulation of macrophage cytokine production"/>
    <property type="evidence" value="ECO:0000250"/>
    <property type="project" value="AgBase"/>
</dbReference>
<dbReference type="GO" id="GO:0051891">
    <property type="term" value="P:positive regulation of cardioblast differentiation"/>
    <property type="evidence" value="ECO:0000250"/>
    <property type="project" value="AgBase"/>
</dbReference>
<dbReference type="GO" id="GO:0033630">
    <property type="term" value="P:positive regulation of cell adhesion mediated by integrin"/>
    <property type="evidence" value="ECO:0000250"/>
    <property type="project" value="AgBase"/>
</dbReference>
<dbReference type="GO" id="GO:0051781">
    <property type="term" value="P:positive regulation of cell division"/>
    <property type="evidence" value="ECO:0007669"/>
    <property type="project" value="UniProtKB-KW"/>
</dbReference>
<dbReference type="GO" id="GO:0008284">
    <property type="term" value="P:positive regulation of cell population proliferation"/>
    <property type="evidence" value="ECO:0000250"/>
    <property type="project" value="AgBase"/>
</dbReference>
<dbReference type="GO" id="GO:0010634">
    <property type="term" value="P:positive regulation of epithelial cell migration"/>
    <property type="evidence" value="ECO:0000250"/>
    <property type="project" value="AgBase"/>
</dbReference>
<dbReference type="GO" id="GO:0010718">
    <property type="term" value="P:positive regulation of epithelial to mesenchymal transition"/>
    <property type="evidence" value="ECO:0000250"/>
    <property type="project" value="AgBase"/>
</dbReference>
<dbReference type="GO" id="GO:0045823">
    <property type="term" value="P:positive regulation of heart contraction"/>
    <property type="evidence" value="ECO:0000250"/>
    <property type="project" value="AgBase"/>
</dbReference>
<dbReference type="GO" id="GO:0045726">
    <property type="term" value="P:positive regulation of integrin biosynthetic process"/>
    <property type="evidence" value="ECO:0000250"/>
    <property type="project" value="AgBase"/>
</dbReference>
<dbReference type="GO" id="GO:0043525">
    <property type="term" value="P:positive regulation of neuron apoptotic process"/>
    <property type="evidence" value="ECO:0000250"/>
    <property type="project" value="AgBase"/>
</dbReference>
<dbReference type="GO" id="GO:0051897">
    <property type="term" value="P:positive regulation of phosphatidylinositol 3-kinase/protein kinase B signal transduction"/>
    <property type="evidence" value="ECO:0000250"/>
    <property type="project" value="AgBase"/>
</dbReference>
<dbReference type="GO" id="GO:0050714">
    <property type="term" value="P:positive regulation of protein secretion"/>
    <property type="evidence" value="ECO:0000250"/>
    <property type="project" value="AgBase"/>
</dbReference>
<dbReference type="GO" id="GO:0060391">
    <property type="term" value="P:positive regulation of SMAD protein signal transduction"/>
    <property type="evidence" value="ECO:0000250"/>
    <property type="project" value="AgBase"/>
</dbReference>
<dbReference type="GO" id="GO:0032874">
    <property type="term" value="P:positive regulation of stress-activated MAPK cascade"/>
    <property type="evidence" value="ECO:0000250"/>
    <property type="project" value="AgBase"/>
</dbReference>
<dbReference type="GO" id="GO:0051795">
    <property type="term" value="P:positive regulation of timing of catagen"/>
    <property type="evidence" value="ECO:0000250"/>
    <property type="project" value="AgBase"/>
</dbReference>
<dbReference type="GO" id="GO:0042127">
    <property type="term" value="P:regulation of cell population proliferation"/>
    <property type="evidence" value="ECO:0000250"/>
    <property type="project" value="AgBase"/>
</dbReference>
<dbReference type="GO" id="GO:0032909">
    <property type="term" value="P:regulation of transforming growth factor beta2 production"/>
    <property type="evidence" value="ECO:0000250"/>
    <property type="project" value="AgBase"/>
</dbReference>
<dbReference type="GO" id="GO:0032570">
    <property type="term" value="P:response to progesterone"/>
    <property type="evidence" value="ECO:0000250"/>
    <property type="project" value="AgBase"/>
</dbReference>
<dbReference type="GO" id="GO:0009611">
    <property type="term" value="P:response to wounding"/>
    <property type="evidence" value="ECO:0000250"/>
    <property type="project" value="AgBase"/>
</dbReference>
<dbReference type="GO" id="GO:0007435">
    <property type="term" value="P:salivary gland morphogenesis"/>
    <property type="evidence" value="ECO:0000250"/>
    <property type="project" value="AgBase"/>
</dbReference>
<dbReference type="GO" id="GO:0007165">
    <property type="term" value="P:signal transduction"/>
    <property type="evidence" value="ECO:0000250"/>
    <property type="project" value="AgBase"/>
</dbReference>
<dbReference type="GO" id="GO:0023052">
    <property type="term" value="P:signaling"/>
    <property type="evidence" value="ECO:0000250"/>
    <property type="project" value="AgBase"/>
</dbReference>
<dbReference type="GO" id="GO:0007179">
    <property type="term" value="P:transforming growth factor beta receptor signaling pathway"/>
    <property type="evidence" value="ECO:0000250"/>
    <property type="project" value="AgBase"/>
</dbReference>
<dbReference type="CDD" id="cd19385">
    <property type="entry name" value="TGF_beta_TGFB2"/>
    <property type="match status" value="1"/>
</dbReference>
<dbReference type="FunFam" id="2.10.90.10:FF:000004">
    <property type="entry name" value="Transforming growth factor beta"/>
    <property type="match status" value="1"/>
</dbReference>
<dbReference type="FunFam" id="2.60.120.970:FF:000002">
    <property type="entry name" value="Transforming growth factor beta"/>
    <property type="match status" value="1"/>
</dbReference>
<dbReference type="Gene3D" id="2.60.120.970">
    <property type="match status" value="1"/>
</dbReference>
<dbReference type="Gene3D" id="2.10.90.10">
    <property type="entry name" value="Cystine-knot cytokines"/>
    <property type="match status" value="1"/>
</dbReference>
<dbReference type="InterPro" id="IPR029034">
    <property type="entry name" value="Cystine-knot_cytokine"/>
</dbReference>
<dbReference type="InterPro" id="IPR001839">
    <property type="entry name" value="TGF-b_C"/>
</dbReference>
<dbReference type="InterPro" id="IPR001111">
    <property type="entry name" value="TGF-b_propeptide"/>
</dbReference>
<dbReference type="InterPro" id="IPR016319">
    <property type="entry name" value="TGF-beta"/>
</dbReference>
<dbReference type="InterPro" id="IPR015615">
    <property type="entry name" value="TGF-beta-rel"/>
</dbReference>
<dbReference type="InterPro" id="IPR003940">
    <property type="entry name" value="TGFb2"/>
</dbReference>
<dbReference type="InterPro" id="IPR017948">
    <property type="entry name" value="TGFb_CS"/>
</dbReference>
<dbReference type="PANTHER" id="PTHR11848">
    <property type="entry name" value="TGF-BETA FAMILY"/>
    <property type="match status" value="1"/>
</dbReference>
<dbReference type="PANTHER" id="PTHR11848:SF141">
    <property type="entry name" value="TRANSFORMING GROWTH FACTOR BETA-2 PROPROTEIN"/>
    <property type="match status" value="1"/>
</dbReference>
<dbReference type="Pfam" id="PF00019">
    <property type="entry name" value="TGF_beta"/>
    <property type="match status" value="1"/>
</dbReference>
<dbReference type="Pfam" id="PF00688">
    <property type="entry name" value="TGFb_propeptide"/>
    <property type="match status" value="1"/>
</dbReference>
<dbReference type="PIRSF" id="PIRSF001787">
    <property type="entry name" value="TGF-beta"/>
    <property type="match status" value="1"/>
</dbReference>
<dbReference type="PRINTS" id="PR01423">
    <property type="entry name" value="TGFBETA"/>
</dbReference>
<dbReference type="PRINTS" id="PR01425">
    <property type="entry name" value="TGFBETA2"/>
</dbReference>
<dbReference type="SMART" id="SM00204">
    <property type="entry name" value="TGFB"/>
    <property type="match status" value="1"/>
</dbReference>
<dbReference type="SUPFAM" id="SSF57501">
    <property type="entry name" value="Cystine-knot cytokines"/>
    <property type="match status" value="1"/>
</dbReference>
<dbReference type="PROSITE" id="PS00250">
    <property type="entry name" value="TGF_BETA_1"/>
    <property type="match status" value="1"/>
</dbReference>
<dbReference type="PROSITE" id="PS51362">
    <property type="entry name" value="TGF_BETA_2"/>
    <property type="match status" value="1"/>
</dbReference>
<name>TGFB2_MUSPF</name>
<organism>
    <name type="scientific">Mustela putorius furo</name>
    <name type="common">European domestic ferret</name>
    <name type="synonym">Mustela furo</name>
    <dbReference type="NCBI Taxonomy" id="9669"/>
    <lineage>
        <taxon>Eukaryota</taxon>
        <taxon>Metazoa</taxon>
        <taxon>Chordata</taxon>
        <taxon>Craniata</taxon>
        <taxon>Vertebrata</taxon>
        <taxon>Euteleostomi</taxon>
        <taxon>Mammalia</taxon>
        <taxon>Eutheria</taxon>
        <taxon>Laurasiatheria</taxon>
        <taxon>Carnivora</taxon>
        <taxon>Caniformia</taxon>
        <taxon>Musteloidea</taxon>
        <taxon>Mustelidae</taxon>
        <taxon>Mustelinae</taxon>
        <taxon>Mustela</taxon>
    </lineage>
</organism>